<name>SMC_DELAS</name>
<organism>
    <name type="scientific">Delftia acidovorans (strain DSM 14801 / SPH-1)</name>
    <dbReference type="NCBI Taxonomy" id="398578"/>
    <lineage>
        <taxon>Bacteria</taxon>
        <taxon>Pseudomonadati</taxon>
        <taxon>Pseudomonadota</taxon>
        <taxon>Betaproteobacteria</taxon>
        <taxon>Burkholderiales</taxon>
        <taxon>Comamonadaceae</taxon>
        <taxon>Delftia</taxon>
    </lineage>
</organism>
<reference key="1">
    <citation type="submission" date="2007-11" db="EMBL/GenBank/DDBJ databases">
        <title>Complete sequence of Delftia acidovorans DSM 14801 / SPH-1.</title>
        <authorList>
            <person name="Copeland A."/>
            <person name="Lucas S."/>
            <person name="Lapidus A."/>
            <person name="Barry K."/>
            <person name="Glavina del Rio T."/>
            <person name="Dalin E."/>
            <person name="Tice H."/>
            <person name="Pitluck S."/>
            <person name="Lowry S."/>
            <person name="Clum A."/>
            <person name="Schmutz J."/>
            <person name="Larimer F."/>
            <person name="Land M."/>
            <person name="Hauser L."/>
            <person name="Kyrpides N."/>
            <person name="Kim E."/>
            <person name="Schleheck D."/>
            <person name="Richardson P."/>
        </authorList>
    </citation>
    <scope>NUCLEOTIDE SEQUENCE [LARGE SCALE GENOMIC DNA]</scope>
    <source>
        <strain>DSM 14801 / SPH-1</strain>
    </source>
</reference>
<sequence length="1175" mass="131260">MRLNSIKLSGFKSFAEPTNFMLPGQLVGVVGPNGCGKSNIMDAVRWVLGESKASELRGESMQDVIFNGTTHRKPASRSSVELVFDNSDHRAGGQWGQFGEIAVKRVLTREGNSSYFINNQAVRRRDVQDVFLGTGLGPRAYAIIGQGTISRIIESRPEELRLFLEEAAGVSKYKERRRETENRLSATTENLTRVEDILRELNNNLDRLEKQAEVAAQYNALQSQVTLKQQQLWFLKRAEAEAEQDRVRVEGLQAVNELEERMADIRNNESGLETLRQAHYDASDQVNQAQAKLYESTAEVGKLEAEIRYVLEGRQRVQQRLQQLSEQVLLWNSRREEAEAEIENLEGAGMDAEEQAEMLAAQVEEQSMRLPDLEDALRNAQKADTDQRASVVQVQQQIQVLAAEQRSLDEQRRQFETRFERLRADRNALETPDEARLNNLQSQLQEARELAEMADAVLNELQDSVPQLDEDRRTRQQAVNAEAARHADLSARLEALKALQEKVKTDGKLQPWLAKHGLDGMQGLWSRIAIEPGWENALEAALRERLGALEVGRLDMVRGFLGSGGHDAPPARLAFFSPPQGAPAPAAGRWQHLSDLLRVNDAGLRAVLGDWLQDCYTAPTLEEALSRRSELRPGETVYVPTGHAVSSHSVSFYAQDSEQSGLLARAQEIEHLEKEVRAQALISDESRTALVRAESAYAEASQRLVSARREASESQSRAHELQVETLRLSQLAEQARARNAQISADLAEVEAQLSDIEERRVAAEARFEELDMQLADSQERHAQLGDKVLESERRLNESREQLRTLERQAQEATFSRRSLEARRGELSRTIETASQQARSLADEQQRAQDELTRLTDAAAQGGLQDALDLKMQREQAVAARRSEYDDLTNKLRASDERRQQLEKALDPLRQRITEFQLKEQAARLGLEQYSTLLEEAGADLAAVSQSIAEANVRMHGLQGEIDRLHREIAALGAVNLAALDELKLARERKTFLDAQTEDLTQAMNTLEDAIRKIDAETRELLSGTFETVNGHFGRMFPELFGGGQAKLVITGDEILDSGVQVIAQPPGKKNQTIHLLSGGEKALTAIALVFAIFQLNPAPFCLLDEVDAPLDDANTERYAKLVASMSKSTQFLFISHNKIAMEMAQQLIGVTMQEQGVSRIVAVDMESALSMAELS</sequence>
<comment type="function">
    <text evidence="1">Required for chromosome condensation and partitioning.</text>
</comment>
<comment type="subunit">
    <text evidence="1">Homodimer.</text>
</comment>
<comment type="subcellular location">
    <subcellularLocation>
        <location evidence="1">Cytoplasm</location>
    </subcellularLocation>
</comment>
<comment type="domain">
    <text evidence="1">Contains large globular domains required for ATP hydrolysis at each terminus and a third globular domain forming a flexible SMC hinge near the middle of the molecule. These domains are separated by coiled-coil structures.</text>
</comment>
<comment type="similarity">
    <text evidence="1">Belongs to the SMC family.</text>
</comment>
<comment type="sequence caution" evidence="3">
    <conflict type="erroneous initiation">
        <sequence resource="EMBL-CDS" id="ABX36224"/>
    </conflict>
    <text>Extended N-terminus.</text>
</comment>
<keyword id="KW-0067">ATP-binding</keyword>
<keyword id="KW-0175">Coiled coil</keyword>
<keyword id="KW-0963">Cytoplasm</keyword>
<keyword id="KW-0238">DNA-binding</keyword>
<keyword id="KW-0547">Nucleotide-binding</keyword>
<keyword id="KW-1185">Reference proteome</keyword>
<accession>A9BZW2</accession>
<feature type="chain" id="PRO_0000409270" description="Chromosome partition protein Smc">
    <location>
        <begin position="1"/>
        <end position="1175"/>
    </location>
</feature>
<feature type="domain" description="SMC hinge">
    <location>
        <begin position="524"/>
        <end position="625"/>
    </location>
</feature>
<feature type="region of interest" description="Disordered" evidence="2">
    <location>
        <begin position="807"/>
        <end position="849"/>
    </location>
</feature>
<feature type="coiled-coil region" evidence="1">
    <location>
        <begin position="170"/>
        <end position="504"/>
    </location>
</feature>
<feature type="coiled-coil region" evidence="1">
    <location>
        <begin position="684"/>
        <end position="918"/>
    </location>
</feature>
<feature type="coiled-coil region" evidence="1">
    <location>
        <begin position="944"/>
        <end position="1022"/>
    </location>
</feature>
<feature type="compositionally biased region" description="Basic and acidic residues" evidence="2">
    <location>
        <begin position="817"/>
        <end position="828"/>
    </location>
</feature>
<feature type="compositionally biased region" description="Polar residues" evidence="2">
    <location>
        <begin position="829"/>
        <end position="838"/>
    </location>
</feature>
<feature type="compositionally biased region" description="Basic and acidic residues" evidence="2">
    <location>
        <begin position="840"/>
        <end position="849"/>
    </location>
</feature>
<feature type="binding site" evidence="1">
    <location>
        <begin position="32"/>
        <end position="39"/>
    </location>
    <ligand>
        <name>ATP</name>
        <dbReference type="ChEBI" id="CHEBI:30616"/>
    </ligand>
</feature>
<proteinExistence type="inferred from homology"/>
<gene>
    <name evidence="1" type="primary">smc</name>
    <name type="ordered locus">Daci_3590</name>
</gene>
<dbReference type="EMBL" id="CP000884">
    <property type="protein sequence ID" value="ABX36224.1"/>
    <property type="status" value="ALT_INIT"/>
    <property type="molecule type" value="Genomic_DNA"/>
</dbReference>
<dbReference type="RefSeq" id="WP_043781925.1">
    <property type="nucleotide sequence ID" value="NC_010002.1"/>
</dbReference>
<dbReference type="SMR" id="A9BZW2"/>
<dbReference type="STRING" id="398578.Daci_3590"/>
<dbReference type="GeneID" id="24114005"/>
<dbReference type="KEGG" id="dac:Daci_3590"/>
<dbReference type="eggNOG" id="COG1196">
    <property type="taxonomic scope" value="Bacteria"/>
</dbReference>
<dbReference type="HOGENOM" id="CLU_001042_2_2_4"/>
<dbReference type="Proteomes" id="UP000000784">
    <property type="component" value="Chromosome"/>
</dbReference>
<dbReference type="GO" id="GO:0005694">
    <property type="term" value="C:chromosome"/>
    <property type="evidence" value="ECO:0007669"/>
    <property type="project" value="InterPro"/>
</dbReference>
<dbReference type="GO" id="GO:0005737">
    <property type="term" value="C:cytoplasm"/>
    <property type="evidence" value="ECO:0007669"/>
    <property type="project" value="UniProtKB-SubCell"/>
</dbReference>
<dbReference type="GO" id="GO:0005524">
    <property type="term" value="F:ATP binding"/>
    <property type="evidence" value="ECO:0007669"/>
    <property type="project" value="UniProtKB-UniRule"/>
</dbReference>
<dbReference type="GO" id="GO:0016887">
    <property type="term" value="F:ATP hydrolysis activity"/>
    <property type="evidence" value="ECO:0007669"/>
    <property type="project" value="InterPro"/>
</dbReference>
<dbReference type="GO" id="GO:0003677">
    <property type="term" value="F:DNA binding"/>
    <property type="evidence" value="ECO:0007669"/>
    <property type="project" value="UniProtKB-UniRule"/>
</dbReference>
<dbReference type="GO" id="GO:0030261">
    <property type="term" value="P:chromosome condensation"/>
    <property type="evidence" value="ECO:0007669"/>
    <property type="project" value="InterPro"/>
</dbReference>
<dbReference type="GO" id="GO:0007059">
    <property type="term" value="P:chromosome segregation"/>
    <property type="evidence" value="ECO:0007669"/>
    <property type="project" value="UniProtKB-UniRule"/>
</dbReference>
<dbReference type="GO" id="GO:0006260">
    <property type="term" value="P:DNA replication"/>
    <property type="evidence" value="ECO:0007669"/>
    <property type="project" value="UniProtKB-UniRule"/>
</dbReference>
<dbReference type="GO" id="GO:0007062">
    <property type="term" value="P:sister chromatid cohesion"/>
    <property type="evidence" value="ECO:0007669"/>
    <property type="project" value="InterPro"/>
</dbReference>
<dbReference type="CDD" id="cd03278">
    <property type="entry name" value="ABC_SMC_barmotin"/>
    <property type="match status" value="1"/>
</dbReference>
<dbReference type="Gene3D" id="1.10.287.1490">
    <property type="match status" value="1"/>
</dbReference>
<dbReference type="Gene3D" id="3.40.50.300">
    <property type="entry name" value="P-loop containing nucleotide triphosphate hydrolases"/>
    <property type="match status" value="2"/>
</dbReference>
<dbReference type="HAMAP" id="MF_01894">
    <property type="entry name" value="Smc_prok"/>
    <property type="match status" value="1"/>
</dbReference>
<dbReference type="InterPro" id="IPR027417">
    <property type="entry name" value="P-loop_NTPase"/>
</dbReference>
<dbReference type="InterPro" id="IPR003395">
    <property type="entry name" value="RecF/RecN/SMC_N"/>
</dbReference>
<dbReference type="InterPro" id="IPR024704">
    <property type="entry name" value="SMC"/>
</dbReference>
<dbReference type="InterPro" id="IPR010935">
    <property type="entry name" value="SMC_hinge"/>
</dbReference>
<dbReference type="InterPro" id="IPR036277">
    <property type="entry name" value="SMC_hinge_sf"/>
</dbReference>
<dbReference type="InterPro" id="IPR011890">
    <property type="entry name" value="SMC_prok"/>
</dbReference>
<dbReference type="NCBIfam" id="TIGR02168">
    <property type="entry name" value="SMC_prok_B"/>
    <property type="match status" value="1"/>
</dbReference>
<dbReference type="PANTHER" id="PTHR43977">
    <property type="entry name" value="STRUCTURAL MAINTENANCE OF CHROMOSOMES PROTEIN 3"/>
    <property type="match status" value="1"/>
</dbReference>
<dbReference type="Pfam" id="PF06470">
    <property type="entry name" value="SMC_hinge"/>
    <property type="match status" value="1"/>
</dbReference>
<dbReference type="Pfam" id="PF02463">
    <property type="entry name" value="SMC_N"/>
    <property type="match status" value="1"/>
</dbReference>
<dbReference type="PIRSF" id="PIRSF005719">
    <property type="entry name" value="SMC"/>
    <property type="match status" value="1"/>
</dbReference>
<dbReference type="SMART" id="SM00968">
    <property type="entry name" value="SMC_hinge"/>
    <property type="match status" value="1"/>
</dbReference>
<dbReference type="SUPFAM" id="SSF52540">
    <property type="entry name" value="P-loop containing nucleoside triphosphate hydrolases"/>
    <property type="match status" value="1"/>
</dbReference>
<dbReference type="SUPFAM" id="SSF75553">
    <property type="entry name" value="Smc hinge domain"/>
    <property type="match status" value="1"/>
</dbReference>
<protein>
    <recommendedName>
        <fullName evidence="1">Chromosome partition protein Smc</fullName>
    </recommendedName>
</protein>
<evidence type="ECO:0000255" key="1">
    <source>
        <dbReference type="HAMAP-Rule" id="MF_01894"/>
    </source>
</evidence>
<evidence type="ECO:0000256" key="2">
    <source>
        <dbReference type="SAM" id="MobiDB-lite"/>
    </source>
</evidence>
<evidence type="ECO:0000305" key="3"/>